<dbReference type="EMBL" id="AJ294725">
    <property type="protein sequence ID" value="CAC24607.1"/>
    <property type="molecule type" value="Genomic_DNA"/>
</dbReference>
<dbReference type="PIR" id="S14920">
    <property type="entry name" value="S14920"/>
</dbReference>
<dbReference type="RefSeq" id="NP_074996.1">
    <property type="nucleotide sequence ID" value="NC_002652.1"/>
</dbReference>
<dbReference type="GeneID" id="1457319"/>
<dbReference type="GO" id="GO:0009536">
    <property type="term" value="C:plastid"/>
    <property type="evidence" value="ECO:0007669"/>
    <property type="project" value="UniProtKB-SubCell"/>
</dbReference>
<dbReference type="InterPro" id="IPR006851">
    <property type="entry name" value="DUF613"/>
</dbReference>
<dbReference type="Pfam" id="PF04764">
    <property type="entry name" value="DUF613"/>
    <property type="match status" value="1"/>
</dbReference>
<evidence type="ECO:0000305" key="1"/>
<comment type="subcellular location">
    <subcellularLocation>
        <location>Plastid</location>
    </subcellularLocation>
</comment>
<comment type="similarity">
    <text evidence="1">Belongs to the A.longa ORF167/ORF288 family.</text>
</comment>
<accession>P14758</accession>
<proteinExistence type="inferred from homology"/>
<sequence length="211" mass="25872">MFIYYINMKTEKTNYIEILIIKLIFFILTPIKIIFFIAKKIIKNPIIYRFIFKYLLYMQNKIIIINNKEYFYRIPKKKEYWEWFSAKPLYVNGKLINEIKTKEQRINFSLGKMIIKESESLTELEYVLLDLFWFGPFQMKYQNILRQNDIIIKKGVKNIKKIFQENNKFKGINLIFQKTDICKIYSGKFYTYERITEDNILLIYVFIKNKD</sequence>
<reference key="1">
    <citation type="journal article" date="1990" name="Mol. Gen. Genet.">
        <title>Genes for the plastid elongation factor Tu and ribosomal protein S7 and six tRNA genes on the 73 kb DNA from Astasia longa that resembles the chloroplast DNA of Euglena.</title>
        <authorList>
            <person name="Siemeister G."/>
            <person name="Buchholz C."/>
            <person name="Hachtel W."/>
        </authorList>
    </citation>
    <scope>NUCLEOTIDE SEQUENCE [GENOMIC DNA]</scope>
    <source>
        <strain>CCAP 1204-17a</strain>
    </source>
</reference>
<reference key="2">
    <citation type="journal article" date="1994" name="Curr. Genet.">
        <title>Genes for components of the chloroplast translational apparatus are conserved in the reduced 73-kb plastid DNA of the nonphotosynthetic euglenoid flagellate Astasia longa.</title>
        <authorList>
            <person name="Gockel G."/>
            <person name="Hachtel W."/>
            <person name="Baier S."/>
            <person name="Fliss C."/>
            <person name="Henke M."/>
        </authorList>
    </citation>
    <scope>NUCLEOTIDE SEQUENCE [GENOMIC DNA]</scope>
    <source>
        <strain>CCAP 1204-17a</strain>
    </source>
</reference>
<reference key="3">
    <citation type="journal article" date="2000" name="Protist">
        <title>Complete gene map of the plastid genome of the nonphotosynthetic euglenoid flagellate Astasia longa.</title>
        <authorList>
            <person name="Gockel G."/>
            <person name="Hachtel W."/>
        </authorList>
    </citation>
    <scope>NUCLEOTIDE SEQUENCE [LARGE SCALE GENOMIC DNA]</scope>
    <source>
        <strain>CCAP 1204-17a</strain>
    </source>
</reference>
<keyword id="KW-0934">Plastid</keyword>
<geneLocation type="non-photosynthetic plastid"/>
<feature type="chain" id="PRO_0000217421" description="Uncharacterized 25.9 kDa protein in rpl12-rps7 intergenic region">
    <location>
        <begin position="1"/>
        <end position="211"/>
    </location>
</feature>
<organism>
    <name type="scientific">Euglena longa</name>
    <name type="common">Euglenophycean alga</name>
    <name type="synonym">Astasia longa</name>
    <dbReference type="NCBI Taxonomy" id="3037"/>
    <lineage>
        <taxon>Eukaryota</taxon>
        <taxon>Discoba</taxon>
        <taxon>Euglenozoa</taxon>
        <taxon>Euglenida</taxon>
        <taxon>Spirocuta</taxon>
        <taxon>Euglenophyceae</taxon>
        <taxon>Euglenales</taxon>
        <taxon>Euglenaceae</taxon>
        <taxon>Euglena</taxon>
    </lineage>
</organism>
<name>YCY5_EUGLO</name>
<protein>
    <recommendedName>
        <fullName>Uncharacterized 25.9 kDa protein in rpl12-rps7 intergenic region</fullName>
    </recommendedName>
    <alternativeName>
        <fullName>ORF211</fullName>
    </alternativeName>
</protein>